<gene>
    <name type="primary">UGT87A1</name>
    <name type="ordered locus">At2g30150</name>
    <name type="ORF">T27E13.11</name>
</gene>
<evidence type="ECO:0000250" key="1"/>
<evidence type="ECO:0000305" key="2"/>
<proteinExistence type="evidence at transcript level"/>
<accession>O64732</accession>
<accession>Q8L7D4</accession>
<keyword id="KW-0328">Glycosyltransferase</keyword>
<keyword id="KW-1185">Reference proteome</keyword>
<keyword id="KW-0808">Transferase</keyword>
<reference key="1">
    <citation type="journal article" date="1999" name="Nature">
        <title>Sequence and analysis of chromosome 2 of the plant Arabidopsis thaliana.</title>
        <authorList>
            <person name="Lin X."/>
            <person name="Kaul S."/>
            <person name="Rounsley S.D."/>
            <person name="Shea T.P."/>
            <person name="Benito M.-I."/>
            <person name="Town C.D."/>
            <person name="Fujii C.Y."/>
            <person name="Mason T.M."/>
            <person name="Bowman C.L."/>
            <person name="Barnstead M.E."/>
            <person name="Feldblyum T.V."/>
            <person name="Buell C.R."/>
            <person name="Ketchum K.A."/>
            <person name="Lee J.J."/>
            <person name="Ronning C.M."/>
            <person name="Koo H.L."/>
            <person name="Moffat K.S."/>
            <person name="Cronin L.A."/>
            <person name="Shen M."/>
            <person name="Pai G."/>
            <person name="Van Aken S."/>
            <person name="Umayam L."/>
            <person name="Tallon L.J."/>
            <person name="Gill J.E."/>
            <person name="Adams M.D."/>
            <person name="Carrera A.J."/>
            <person name="Creasy T.H."/>
            <person name="Goodman H.M."/>
            <person name="Somerville C.R."/>
            <person name="Copenhaver G.P."/>
            <person name="Preuss D."/>
            <person name="Nierman W.C."/>
            <person name="White O."/>
            <person name="Eisen J.A."/>
            <person name="Salzberg S.L."/>
            <person name="Fraser C.M."/>
            <person name="Venter J.C."/>
        </authorList>
    </citation>
    <scope>NUCLEOTIDE SEQUENCE [LARGE SCALE GENOMIC DNA]</scope>
    <source>
        <strain>cv. Columbia</strain>
    </source>
</reference>
<reference key="2">
    <citation type="journal article" date="2017" name="Plant J.">
        <title>Araport11: a complete reannotation of the Arabidopsis thaliana reference genome.</title>
        <authorList>
            <person name="Cheng C.Y."/>
            <person name="Krishnakumar V."/>
            <person name="Chan A.P."/>
            <person name="Thibaud-Nissen F."/>
            <person name="Schobel S."/>
            <person name="Town C.D."/>
        </authorList>
    </citation>
    <scope>GENOME REANNOTATION</scope>
    <source>
        <strain>cv. Columbia</strain>
    </source>
</reference>
<reference key="3">
    <citation type="journal article" date="2003" name="Science">
        <title>Empirical analysis of transcriptional activity in the Arabidopsis genome.</title>
        <authorList>
            <person name="Yamada K."/>
            <person name="Lim J."/>
            <person name="Dale J.M."/>
            <person name="Chen H."/>
            <person name="Shinn P."/>
            <person name="Palm C.J."/>
            <person name="Southwick A.M."/>
            <person name="Wu H.C."/>
            <person name="Kim C.J."/>
            <person name="Nguyen M."/>
            <person name="Pham P.K."/>
            <person name="Cheuk R.F."/>
            <person name="Karlin-Newmann G."/>
            <person name="Liu S.X."/>
            <person name="Lam B."/>
            <person name="Sakano H."/>
            <person name="Wu T."/>
            <person name="Yu G."/>
            <person name="Miranda M."/>
            <person name="Quach H.L."/>
            <person name="Tripp M."/>
            <person name="Chang C.H."/>
            <person name="Lee J.M."/>
            <person name="Toriumi M.J."/>
            <person name="Chan M.M."/>
            <person name="Tang C.C."/>
            <person name="Onodera C.S."/>
            <person name="Deng J.M."/>
            <person name="Akiyama K."/>
            <person name="Ansari Y."/>
            <person name="Arakawa T."/>
            <person name="Banh J."/>
            <person name="Banno F."/>
            <person name="Bowser L."/>
            <person name="Brooks S.Y."/>
            <person name="Carninci P."/>
            <person name="Chao Q."/>
            <person name="Choy N."/>
            <person name="Enju A."/>
            <person name="Goldsmith A.D."/>
            <person name="Gurjal M."/>
            <person name="Hansen N.F."/>
            <person name="Hayashizaki Y."/>
            <person name="Johnson-Hopson C."/>
            <person name="Hsuan V.W."/>
            <person name="Iida K."/>
            <person name="Karnes M."/>
            <person name="Khan S."/>
            <person name="Koesema E."/>
            <person name="Ishida J."/>
            <person name="Jiang P.X."/>
            <person name="Jones T."/>
            <person name="Kawai J."/>
            <person name="Kamiya A."/>
            <person name="Meyers C."/>
            <person name="Nakajima M."/>
            <person name="Narusaka M."/>
            <person name="Seki M."/>
            <person name="Sakurai T."/>
            <person name="Satou M."/>
            <person name="Tamse R."/>
            <person name="Vaysberg M."/>
            <person name="Wallender E.K."/>
            <person name="Wong C."/>
            <person name="Yamamura Y."/>
            <person name="Yuan S."/>
            <person name="Shinozaki K."/>
            <person name="Davis R.W."/>
            <person name="Theologis A."/>
            <person name="Ecker J.R."/>
        </authorList>
    </citation>
    <scope>NUCLEOTIDE SEQUENCE [LARGE SCALE MRNA] OF 31-440</scope>
    <source>
        <strain>cv. Columbia</strain>
    </source>
</reference>
<reference key="4">
    <citation type="journal article" date="2001" name="J. Biol. Chem.">
        <title>Phylogenetic analysis of the UDP-glycosyltransferase multigene family of Arabidopsis thaliana.</title>
        <authorList>
            <person name="Li Y."/>
            <person name="Baldauf S."/>
            <person name="Lim E.K."/>
            <person name="Bowles D.J."/>
        </authorList>
    </citation>
    <scope>GENE FAMILY</scope>
</reference>
<name>U87A1_ARATH</name>
<sequence>MPWPGRGHINPMLNLCKSLVRRDPNLTVTFVVTEEWLGFIGSDPKPNRIHFATLPNIIPSELVRANDFIAFIDAVLTRLEEPFEQLLDRLNSPPTAIIADTYIIWAVRVGTKRNIPVASFWTTSATILSLFINSDLLASHGHFPIEPSESKLDEIVDYIPGLSPTRLSDLQILHGYSHQVFNIFKKSFGELYKAKYLLFPSAYELEPKAIDFFTSKFDFPVYSTGPLIPLEELSVGNENRELDYFKWLDEQPESSVLYISQGSFLSVSEAQMEEIVVGVREAGVKFFWVARGGELKLKEALEGSLGVVVSWCDQLRVLCHAAIGGFWTHCGYNSTLEGICSGVPLLTFPVFWDQFLNAKMIVEEWRVGMGIERKKQMELLIVSDEIKELVKRFMDGESEEGKEMRRRTCDLSEICRGAVAKGGSSDANIDAFIKDITKIV</sequence>
<comment type="similarity">
    <text evidence="2">Belongs to the UDP-glycosyltransferase family.</text>
</comment>
<comment type="sequence caution" evidence="2">
    <conflict type="erroneous initiation">
        <sequence resource="EMBL-CDS" id="AAM96996"/>
    </conflict>
    <text>Truncated N-terminus.</text>
</comment>
<organism>
    <name type="scientific">Arabidopsis thaliana</name>
    <name type="common">Mouse-ear cress</name>
    <dbReference type="NCBI Taxonomy" id="3702"/>
    <lineage>
        <taxon>Eukaryota</taxon>
        <taxon>Viridiplantae</taxon>
        <taxon>Streptophyta</taxon>
        <taxon>Embryophyta</taxon>
        <taxon>Tracheophyta</taxon>
        <taxon>Spermatophyta</taxon>
        <taxon>Magnoliopsida</taxon>
        <taxon>eudicotyledons</taxon>
        <taxon>Gunneridae</taxon>
        <taxon>Pentapetalae</taxon>
        <taxon>rosids</taxon>
        <taxon>malvids</taxon>
        <taxon>Brassicales</taxon>
        <taxon>Brassicaceae</taxon>
        <taxon>Camelineae</taxon>
        <taxon>Arabidopsis</taxon>
    </lineage>
</organism>
<protein>
    <recommendedName>
        <fullName>UDP-glycosyltransferase 87A1</fullName>
        <ecNumber>2.4.1.-</ecNumber>
    </recommendedName>
</protein>
<dbReference type="EC" id="2.4.1.-"/>
<dbReference type="EMBL" id="AC004165">
    <property type="protein sequence ID" value="AAC16957.1"/>
    <property type="molecule type" value="Genomic_DNA"/>
</dbReference>
<dbReference type="EMBL" id="CP002685">
    <property type="protein sequence ID" value="AEC08352.1"/>
    <property type="molecule type" value="Genomic_DNA"/>
</dbReference>
<dbReference type="EMBL" id="AY136330">
    <property type="protein sequence ID" value="AAM96996.1"/>
    <property type="status" value="ALT_INIT"/>
    <property type="molecule type" value="mRNA"/>
</dbReference>
<dbReference type="EMBL" id="BT000100">
    <property type="protein sequence ID" value="AAN15419.1"/>
    <property type="molecule type" value="mRNA"/>
</dbReference>
<dbReference type="PIR" id="T00583">
    <property type="entry name" value="T00583"/>
</dbReference>
<dbReference type="RefSeq" id="NP_180576.1">
    <property type="nucleotide sequence ID" value="NM_128570.1"/>
</dbReference>
<dbReference type="SMR" id="O64732"/>
<dbReference type="FunCoup" id="O64732">
    <property type="interactions" value="42"/>
</dbReference>
<dbReference type="STRING" id="3702.O64732"/>
<dbReference type="CAZy" id="GT1">
    <property type="family name" value="Glycosyltransferase Family 1"/>
</dbReference>
<dbReference type="PaxDb" id="3702-AT2G30150.1"/>
<dbReference type="ProteomicsDB" id="242618"/>
<dbReference type="EnsemblPlants" id="AT2G30150.1">
    <property type="protein sequence ID" value="AT2G30150.1"/>
    <property type="gene ID" value="AT2G30150"/>
</dbReference>
<dbReference type="GeneID" id="817567"/>
<dbReference type="Gramene" id="AT2G30150.1">
    <property type="protein sequence ID" value="AT2G30150.1"/>
    <property type="gene ID" value="AT2G30150"/>
</dbReference>
<dbReference type="KEGG" id="ath:AT2G30150"/>
<dbReference type="Araport" id="AT2G30150"/>
<dbReference type="TAIR" id="AT2G30150"/>
<dbReference type="eggNOG" id="KOG1192">
    <property type="taxonomic scope" value="Eukaryota"/>
</dbReference>
<dbReference type="HOGENOM" id="CLU_001724_0_3_1"/>
<dbReference type="InParanoid" id="O64732"/>
<dbReference type="OMA" id="EPEYIKW"/>
<dbReference type="OrthoDB" id="5835829at2759"/>
<dbReference type="PhylomeDB" id="O64732"/>
<dbReference type="PRO" id="PR:O64732"/>
<dbReference type="Proteomes" id="UP000006548">
    <property type="component" value="Chromosome 2"/>
</dbReference>
<dbReference type="ExpressionAtlas" id="O64732">
    <property type="expression patterns" value="baseline and differential"/>
</dbReference>
<dbReference type="GO" id="GO:0008194">
    <property type="term" value="F:UDP-glycosyltransferase activity"/>
    <property type="evidence" value="ECO:0007669"/>
    <property type="project" value="InterPro"/>
</dbReference>
<dbReference type="CDD" id="cd03784">
    <property type="entry name" value="GT1_Gtf-like"/>
    <property type="match status" value="1"/>
</dbReference>
<dbReference type="FunFam" id="3.40.50.2000:FF:000138">
    <property type="entry name" value="Glycosyltransferase"/>
    <property type="match status" value="1"/>
</dbReference>
<dbReference type="FunFam" id="3.40.50.2000:FF:000152">
    <property type="entry name" value="Glycosyltransferase"/>
    <property type="match status" value="1"/>
</dbReference>
<dbReference type="Gene3D" id="3.40.50.2000">
    <property type="entry name" value="Glycogen Phosphorylase B"/>
    <property type="match status" value="2"/>
</dbReference>
<dbReference type="InterPro" id="IPR002213">
    <property type="entry name" value="UDP_glucos_trans"/>
</dbReference>
<dbReference type="PANTHER" id="PTHR11926:SF1494">
    <property type="entry name" value="FLAVONOL 3-O-GLUCOSYLTRANSFERASE UGT76E12-RELATED"/>
    <property type="match status" value="1"/>
</dbReference>
<dbReference type="PANTHER" id="PTHR11926">
    <property type="entry name" value="GLUCOSYL/GLUCURONOSYL TRANSFERASES"/>
    <property type="match status" value="1"/>
</dbReference>
<dbReference type="Pfam" id="PF00201">
    <property type="entry name" value="UDPGT"/>
    <property type="match status" value="1"/>
</dbReference>
<dbReference type="SUPFAM" id="SSF53756">
    <property type="entry name" value="UDP-Glycosyltransferase/glycogen phosphorylase"/>
    <property type="match status" value="1"/>
</dbReference>
<feature type="chain" id="PRO_0000409133" description="UDP-glycosyltransferase 87A1">
    <location>
        <begin position="1"/>
        <end position="440"/>
    </location>
</feature>
<feature type="binding site" evidence="1">
    <location>
        <position position="263"/>
    </location>
    <ligand>
        <name>UDP-alpha-D-glucose</name>
        <dbReference type="ChEBI" id="CHEBI:58885"/>
    </ligand>
</feature>
<feature type="binding site" evidence="1">
    <location>
        <begin position="312"/>
        <end position="314"/>
    </location>
    <ligand>
        <name>UDP-alpha-D-glucose</name>
        <dbReference type="ChEBI" id="CHEBI:58885"/>
    </ligand>
</feature>
<feature type="binding site" evidence="1">
    <location>
        <begin position="329"/>
        <end position="337"/>
    </location>
    <ligand>
        <name>UDP-alpha-D-glucose</name>
        <dbReference type="ChEBI" id="CHEBI:58885"/>
    </ligand>
</feature>
<feature type="binding site" evidence="1">
    <location>
        <begin position="351"/>
        <end position="354"/>
    </location>
    <ligand>
        <name>UDP-alpha-D-glucose</name>
        <dbReference type="ChEBI" id="CHEBI:58885"/>
    </ligand>
</feature>